<protein>
    <recommendedName>
        <fullName>Phosphoethanolamine transferase EptA</fullName>
        <ecNumber>2.7.-.-</ecNumber>
    </recommendedName>
    <alternativeName>
        <fullName>Polymyxin resistance protein PmrC</fullName>
    </alternativeName>
</protein>
<keyword id="KW-0046">Antibiotic resistance</keyword>
<keyword id="KW-0997">Cell inner membrane</keyword>
<keyword id="KW-1003">Cell membrane</keyword>
<keyword id="KW-0441">Lipid A biosynthesis</keyword>
<keyword id="KW-0444">Lipid biosynthesis</keyword>
<keyword id="KW-0443">Lipid metabolism</keyword>
<keyword id="KW-0448">Lipopolysaccharide biosynthesis</keyword>
<keyword id="KW-0472">Membrane</keyword>
<keyword id="KW-1185">Reference proteome</keyword>
<keyword id="KW-0808">Transferase</keyword>
<keyword id="KW-0812">Transmembrane</keyword>
<keyword id="KW-1133">Transmembrane helix</keyword>
<comment type="function">
    <text evidence="3 4">Catalyzes the addition of a phosphoethanolamine moiety to the lipid A. The phosphoethanolamine modification is required for resistance to polymyxin.</text>
</comment>
<comment type="pathway">
    <text>Bacterial outer membrane biogenesis; LPS lipid A biosynthesis.</text>
</comment>
<comment type="subcellular location">
    <subcellularLocation>
        <location evidence="4">Cell inner membrane</location>
        <topology evidence="4">Multi-pass membrane protein</topology>
    </subcellularLocation>
</comment>
<comment type="induction">
    <text evidence="2 4 5">The eptA-basRS operon is positively autoregulated by BasR under high iron or aluminum concentration conditions.</text>
</comment>
<comment type="similarity">
    <text evidence="6">Belongs to the phosphoethanolamine transferase family. EptA subfamily.</text>
</comment>
<dbReference type="EC" id="2.7.-.-"/>
<dbReference type="EMBL" id="L13395">
    <property type="protein sequence ID" value="AAA72364.1"/>
    <property type="molecule type" value="Genomic_DNA"/>
</dbReference>
<dbReference type="EMBL" id="AE006468">
    <property type="protein sequence ID" value="AAL23117.1"/>
    <property type="molecule type" value="Genomic_DNA"/>
</dbReference>
<dbReference type="PIR" id="A40656">
    <property type="entry name" value="A40656"/>
</dbReference>
<dbReference type="RefSeq" id="WP_000919289.1">
    <property type="nucleotide sequence ID" value="NC_003197.2"/>
</dbReference>
<dbReference type="SMR" id="P36555"/>
<dbReference type="STRING" id="99287.STM4293"/>
<dbReference type="PaxDb" id="99287-STM4293"/>
<dbReference type="KEGG" id="stm:STM4293"/>
<dbReference type="PATRIC" id="fig|99287.12.peg.4515"/>
<dbReference type="HOGENOM" id="CLU_018534_1_0_6"/>
<dbReference type="OMA" id="FWYSAND"/>
<dbReference type="PhylomeDB" id="P36555"/>
<dbReference type="BioCyc" id="SENT99287:STM4293-MONOMER"/>
<dbReference type="BRENDA" id="2.7.8.43">
    <property type="organism ID" value="2169"/>
</dbReference>
<dbReference type="UniPathway" id="UPA00973"/>
<dbReference type="Proteomes" id="UP000001014">
    <property type="component" value="Chromosome"/>
</dbReference>
<dbReference type="GO" id="GO:0005886">
    <property type="term" value="C:plasma membrane"/>
    <property type="evidence" value="ECO:0000318"/>
    <property type="project" value="GO_Central"/>
</dbReference>
<dbReference type="GO" id="GO:0016776">
    <property type="term" value="F:phosphotransferase activity, phosphate group as acceptor"/>
    <property type="evidence" value="ECO:0000318"/>
    <property type="project" value="GO_Central"/>
</dbReference>
<dbReference type="GO" id="GO:0009245">
    <property type="term" value="P:lipid A biosynthetic process"/>
    <property type="evidence" value="ECO:0007669"/>
    <property type="project" value="UniProtKB-UniPathway"/>
</dbReference>
<dbReference type="GO" id="GO:0009244">
    <property type="term" value="P:lipopolysaccharide core region biosynthetic process"/>
    <property type="evidence" value="ECO:0000318"/>
    <property type="project" value="GO_Central"/>
</dbReference>
<dbReference type="GO" id="GO:0046677">
    <property type="term" value="P:response to antibiotic"/>
    <property type="evidence" value="ECO:0007669"/>
    <property type="project" value="UniProtKB-KW"/>
</dbReference>
<dbReference type="CDD" id="cd16017">
    <property type="entry name" value="LptA"/>
    <property type="match status" value="1"/>
</dbReference>
<dbReference type="FunFam" id="3.40.720.10:FF:000022">
    <property type="entry name" value="Phosphoethanolamine transferase eptA"/>
    <property type="match status" value="1"/>
</dbReference>
<dbReference type="Gene3D" id="3.40.720.10">
    <property type="entry name" value="Alkaline Phosphatase, subunit A"/>
    <property type="match status" value="1"/>
</dbReference>
<dbReference type="InterPro" id="IPR017850">
    <property type="entry name" value="Alkaline_phosphatase_core_sf"/>
</dbReference>
<dbReference type="InterPro" id="IPR012549">
    <property type="entry name" value="EptA-like_N"/>
</dbReference>
<dbReference type="InterPro" id="IPR040423">
    <property type="entry name" value="PEA_transferase"/>
</dbReference>
<dbReference type="InterPro" id="IPR000917">
    <property type="entry name" value="Sulfatase_N"/>
</dbReference>
<dbReference type="NCBIfam" id="NF028537">
    <property type="entry name" value="P_eth_NH2_trans"/>
    <property type="match status" value="1"/>
</dbReference>
<dbReference type="NCBIfam" id="NF008619">
    <property type="entry name" value="PRK11598.1"/>
    <property type="match status" value="1"/>
</dbReference>
<dbReference type="PANTHER" id="PTHR30443">
    <property type="entry name" value="INNER MEMBRANE PROTEIN"/>
    <property type="match status" value="1"/>
</dbReference>
<dbReference type="PANTHER" id="PTHR30443:SF0">
    <property type="entry name" value="PHOSPHOETHANOLAMINE TRANSFERASE EPTA"/>
    <property type="match status" value="1"/>
</dbReference>
<dbReference type="Pfam" id="PF08019">
    <property type="entry name" value="EptA_B_N"/>
    <property type="match status" value="1"/>
</dbReference>
<dbReference type="Pfam" id="PF00884">
    <property type="entry name" value="Sulfatase"/>
    <property type="match status" value="1"/>
</dbReference>
<dbReference type="SUPFAM" id="SSF53649">
    <property type="entry name" value="Alkaline phosphatase-like"/>
    <property type="match status" value="1"/>
</dbReference>
<name>EPTA_SALTY</name>
<gene>
    <name type="primary">eptA</name>
    <name type="synonym">pagB</name>
    <name type="synonym">pmrC</name>
    <name type="ordered locus">STM4293</name>
</gene>
<reference key="1">
    <citation type="journal article" date="1993" name="J. Bacteriol.">
        <title>Spontaneous pmrA mutants of Salmonella typhimurium LT2 define a new two-component regulatory system with a possible role in virulence.</title>
        <authorList>
            <person name="Roland K.L."/>
            <person name="Martin L.E."/>
            <person name="Esther C.R."/>
            <person name="Spitznagel J.K."/>
        </authorList>
    </citation>
    <scope>NUCLEOTIDE SEQUENCE [GENOMIC DNA]</scope>
    <source>
        <strain>LT2</strain>
    </source>
</reference>
<reference key="2">
    <citation type="journal article" date="2001" name="Nature">
        <title>Complete genome sequence of Salmonella enterica serovar Typhimurium LT2.</title>
        <authorList>
            <person name="McClelland M."/>
            <person name="Sanderson K.E."/>
            <person name="Spieth J."/>
            <person name="Clifton S.W."/>
            <person name="Latreille P."/>
            <person name="Courtney L."/>
            <person name="Porwollik S."/>
            <person name="Ali J."/>
            <person name="Dante M."/>
            <person name="Du F."/>
            <person name="Hou S."/>
            <person name="Layman D."/>
            <person name="Leonard S."/>
            <person name="Nguyen C."/>
            <person name="Scott K."/>
            <person name="Holmes A."/>
            <person name="Grewal N."/>
            <person name="Mulvaney E."/>
            <person name="Ryan E."/>
            <person name="Sun H."/>
            <person name="Florea L."/>
            <person name="Miller W."/>
            <person name="Stoneking T."/>
            <person name="Nhan M."/>
            <person name="Waterston R."/>
            <person name="Wilson R.K."/>
        </authorList>
    </citation>
    <scope>NUCLEOTIDE SEQUENCE [LARGE SCALE GENOMIC DNA]</scope>
    <source>
        <strain>LT2 / SGSC1412 / ATCC 700720</strain>
    </source>
</reference>
<reference key="3">
    <citation type="journal article" date="1996" name="J. Bacteriol.">
        <title>PhoP-PhoQ activates transcription of pmrAB, encoding a two-component regulatory system involved in Salmonella typhimurium antimicrobial peptide resistance.</title>
        <authorList>
            <person name="Gunn J.S."/>
            <person name="Miller S.I."/>
        </authorList>
    </citation>
    <scope>INDUCTION</scope>
    <source>
        <strain>ATCC 14028s / SGSG 2262</strain>
    </source>
</reference>
<reference key="4">
    <citation type="journal article" date="1999" name="J. Biol. Chem.">
        <title>Molecular characterization of the PmrA regulon.</title>
        <authorList>
            <person name="Woesten M.M.S.M."/>
            <person name="Groisman E.A."/>
        </authorList>
    </citation>
    <scope>INDUCTION</scope>
    <source>
        <strain>ATCC 14028s / SGSG 2262</strain>
    </source>
</reference>
<reference key="5">
    <citation type="journal article" date="2001" name="J. Biol. Chem.">
        <title>Lipid A modifications in polymyxin-resistant Salmonella typhimurium: pmrA-dependent 4-amino-4-deoxy-L-arabinose, and phosphoethanolamine incorporation.</title>
        <authorList>
            <person name="Zhou Z."/>
            <person name="Ribeiro A.A."/>
            <person name="Lin S."/>
            <person name="Cotter R.J."/>
            <person name="Miller S.I."/>
            <person name="Raetz C.R.H."/>
        </authorList>
    </citation>
    <scope>FUNCTION</scope>
    <source>
        <strain>ATCC 14028 / SGSG 2980 / CDC 6516-60 / NCTC 12023</strain>
    </source>
</reference>
<reference key="6">
    <citation type="journal article" date="2004" name="J. Bacteriol.">
        <title>The PmrA-regulated pmrC gene mediates phosphoethanolamine modification of lipid A and polymyxin resistance in Salmonella enterica.</title>
        <authorList>
            <person name="Lee H."/>
            <person name="Hsu F.-F."/>
            <person name="Turk J."/>
            <person name="Groisman E.A."/>
        </authorList>
    </citation>
    <scope>FUNCTION</scope>
    <scope>INDUCTION BY BASR</scope>
    <scope>SUBCELLULAR LOCATION</scope>
    <scope>TOPOLOGY</scope>
    <source>
        <strain>ATCC 14028s / SGSG 2262</strain>
    </source>
</reference>
<sequence length="547" mass="61619">MLKRFLKRPVLGQIAWLLLFSFYIAVCLNIAFYKQVLQDLPLNSLRNVLVFISMPVVAFSVVNSVLTLASFIWLNRLLACVFILVGAAAQYFILTYGIIIDRSMIANMMDTTPAETFALMTPQMVLTLGLSGVLAAVIAFWVKIRPATPRLRSGLYRLASVLISILLVILVAAFFYKDYASLFRNNKQLIKALSPSNSIVASWSWYSHQRLANLPLVRIGEDAHRNPLMLKGDRKNLTILIVGETSRGDDFSLGGYPRDTNPRLAKDDVIYFPHTTSCGTATAISVPCMFSDMPRKHYDEELAHHQEGLLDIIQRAGINVLWNDNDGGCKGACDRVPHQNVTELNLPGQCIDGECYDEVLFHGLEDYIDHLKGDGVIVLHTIGSHGPTYYNRYPPQFKKFTPTCDTNEIQNCSQEQLINTYDNTVLYVDYIVDKAINLLKSHQDKFTTSLVYLSDHGESLGENGVYLHGLPYSIAPDTQKHVPMLIWLSKDYQQRYQVDQACLQKRASTLDYSQDNLFSTMLGLTGVQTTYYQAADDILQPCRRLSE</sequence>
<feature type="chain" id="PRO_0000209152" description="Phosphoethanolamine transferase EptA">
    <location>
        <begin position="1"/>
        <end position="547"/>
    </location>
</feature>
<feature type="topological domain" description="Cytoplasmic" evidence="1">
    <location>
        <begin position="1"/>
        <end position="9"/>
    </location>
</feature>
<feature type="transmembrane region" description="Helical" evidence="1">
    <location>
        <begin position="10"/>
        <end position="30"/>
    </location>
</feature>
<feature type="topological domain" description="Periplasmic" evidence="1">
    <location>
        <begin position="31"/>
        <end position="47"/>
    </location>
</feature>
<feature type="transmembrane region" description="Helical" evidence="1">
    <location>
        <begin position="48"/>
        <end position="68"/>
    </location>
</feature>
<feature type="topological domain" description="Cytoplasmic" evidence="1">
    <location>
        <begin position="69"/>
        <end position="79"/>
    </location>
</feature>
<feature type="transmembrane region" description="Helical" evidence="1">
    <location>
        <begin position="80"/>
        <end position="100"/>
    </location>
</feature>
<feature type="topological domain" description="Periplasmic" evidence="1">
    <location>
        <begin position="101"/>
        <end position="123"/>
    </location>
</feature>
<feature type="transmembrane region" description="Helical" evidence="1">
    <location>
        <begin position="124"/>
        <end position="144"/>
    </location>
</feature>
<feature type="topological domain" description="Cytoplasmic" evidence="1">
    <location>
        <begin position="145"/>
        <end position="154"/>
    </location>
</feature>
<feature type="transmembrane region" description="Helical" evidence="1">
    <location>
        <begin position="155"/>
        <end position="175"/>
    </location>
</feature>
<feature type="topological domain" description="Periplasmic" evidence="1">
    <location>
        <begin position="176"/>
        <end position="547"/>
    </location>
</feature>
<organism>
    <name type="scientific">Salmonella typhimurium (strain LT2 / SGSC1412 / ATCC 700720)</name>
    <dbReference type="NCBI Taxonomy" id="99287"/>
    <lineage>
        <taxon>Bacteria</taxon>
        <taxon>Pseudomonadati</taxon>
        <taxon>Pseudomonadota</taxon>
        <taxon>Gammaproteobacteria</taxon>
        <taxon>Enterobacterales</taxon>
        <taxon>Enterobacteriaceae</taxon>
        <taxon>Salmonella</taxon>
    </lineage>
</organism>
<accession>P36555</accession>
<proteinExistence type="evidence at protein level"/>
<evidence type="ECO:0000255" key="1"/>
<evidence type="ECO:0000269" key="2">
    <source>
    </source>
</evidence>
<evidence type="ECO:0000269" key="3">
    <source>
    </source>
</evidence>
<evidence type="ECO:0000269" key="4">
    <source>
    </source>
</evidence>
<evidence type="ECO:0000269" key="5">
    <source>
    </source>
</evidence>
<evidence type="ECO:0000305" key="6"/>